<organism>
    <name type="scientific">Vibrio vulnificus (strain YJ016)</name>
    <dbReference type="NCBI Taxonomy" id="196600"/>
    <lineage>
        <taxon>Bacteria</taxon>
        <taxon>Pseudomonadati</taxon>
        <taxon>Pseudomonadota</taxon>
        <taxon>Gammaproteobacteria</taxon>
        <taxon>Vibrionales</taxon>
        <taxon>Vibrionaceae</taxon>
        <taxon>Vibrio</taxon>
    </lineage>
</organism>
<comment type="function">
    <text evidence="1">RNaseP catalyzes the removal of the 5'-leader sequence from pre-tRNA to produce the mature 5'-terminus. It can also cleave other RNA substrates such as 4.5S RNA. The protein component plays an auxiliary but essential role in vivo by binding to the 5'-leader sequence and broadening the substrate specificity of the ribozyme.</text>
</comment>
<comment type="catalytic activity">
    <reaction evidence="1">
        <text>Endonucleolytic cleavage of RNA, removing 5'-extranucleotides from tRNA precursor.</text>
        <dbReference type="EC" id="3.1.26.5"/>
    </reaction>
</comment>
<comment type="subunit">
    <text evidence="1">Consists of a catalytic RNA component (M1 or rnpB) and a protein subunit.</text>
</comment>
<comment type="similarity">
    <text evidence="1">Belongs to the RnpA family.</text>
</comment>
<feature type="chain" id="PRO_0000198566" description="Ribonuclease P protein component">
    <location>
        <begin position="1"/>
        <end position="118"/>
    </location>
</feature>
<gene>
    <name evidence="1" type="primary">rnpA</name>
    <name type="ordered locus">VV0004</name>
</gene>
<name>RNPA_VIBVY</name>
<keyword id="KW-0255">Endonuclease</keyword>
<keyword id="KW-0378">Hydrolase</keyword>
<keyword id="KW-0540">Nuclease</keyword>
<keyword id="KW-0694">RNA-binding</keyword>
<keyword id="KW-0819">tRNA processing</keyword>
<reference key="1">
    <citation type="journal article" date="2003" name="Genome Res.">
        <title>Comparative genome analysis of Vibrio vulnificus, a marine pathogen.</title>
        <authorList>
            <person name="Chen C.-Y."/>
            <person name="Wu K.-M."/>
            <person name="Chang Y.-C."/>
            <person name="Chang C.-H."/>
            <person name="Tsai H.-C."/>
            <person name="Liao T.-L."/>
            <person name="Liu Y.-M."/>
            <person name="Chen H.-J."/>
            <person name="Shen A.B.-T."/>
            <person name="Li J.-C."/>
            <person name="Su T.-L."/>
            <person name="Shao C.-P."/>
            <person name="Lee C.-T."/>
            <person name="Hor L.-I."/>
            <person name="Tsai S.-F."/>
        </authorList>
    </citation>
    <scope>NUCLEOTIDE SEQUENCE [LARGE SCALE GENOMIC DNA]</scope>
    <source>
        <strain>YJ016</strain>
    </source>
</reference>
<protein>
    <recommendedName>
        <fullName evidence="1">Ribonuclease P protein component</fullName>
        <shortName evidence="1">RNase P protein</shortName>
        <shortName evidence="1">RNaseP protein</shortName>
        <ecNumber evidence="1">3.1.26.5</ecNumber>
    </recommendedName>
    <alternativeName>
        <fullName evidence="1">Protein C5</fullName>
    </alternativeName>
</protein>
<accession>Q7MQK4</accession>
<proteinExistence type="inferred from homology"/>
<sequence>MNTYAFNRELRLLTPEHYQNVFQQAHRAGSPHFTIIARNNNLSHPRLGLAVPKKQIKTAVGRNRFKRLARESFRNTQHQLPNKDFVVIAKKSAQDLSNEELFKLFDKLWHRLSRPSRG</sequence>
<evidence type="ECO:0000255" key="1">
    <source>
        <dbReference type="HAMAP-Rule" id="MF_00227"/>
    </source>
</evidence>
<dbReference type="EC" id="3.1.26.5" evidence="1"/>
<dbReference type="EMBL" id="BA000037">
    <property type="protein sequence ID" value="BAC92768.1"/>
    <property type="molecule type" value="Genomic_DNA"/>
</dbReference>
<dbReference type="SMR" id="Q7MQK4"/>
<dbReference type="STRING" id="672.VV93_v1c30070"/>
<dbReference type="KEGG" id="vvy:VV0004"/>
<dbReference type="eggNOG" id="COG0594">
    <property type="taxonomic scope" value="Bacteria"/>
</dbReference>
<dbReference type="HOGENOM" id="CLU_117179_11_0_6"/>
<dbReference type="Proteomes" id="UP000002675">
    <property type="component" value="Chromosome I"/>
</dbReference>
<dbReference type="GO" id="GO:0030677">
    <property type="term" value="C:ribonuclease P complex"/>
    <property type="evidence" value="ECO:0007669"/>
    <property type="project" value="TreeGrafter"/>
</dbReference>
<dbReference type="GO" id="GO:0042781">
    <property type="term" value="F:3'-tRNA processing endoribonuclease activity"/>
    <property type="evidence" value="ECO:0007669"/>
    <property type="project" value="TreeGrafter"/>
</dbReference>
<dbReference type="GO" id="GO:0004526">
    <property type="term" value="F:ribonuclease P activity"/>
    <property type="evidence" value="ECO:0007669"/>
    <property type="project" value="UniProtKB-UniRule"/>
</dbReference>
<dbReference type="GO" id="GO:0000049">
    <property type="term" value="F:tRNA binding"/>
    <property type="evidence" value="ECO:0007669"/>
    <property type="project" value="UniProtKB-UniRule"/>
</dbReference>
<dbReference type="GO" id="GO:0001682">
    <property type="term" value="P:tRNA 5'-leader removal"/>
    <property type="evidence" value="ECO:0007669"/>
    <property type="project" value="UniProtKB-UniRule"/>
</dbReference>
<dbReference type="Gene3D" id="3.30.230.10">
    <property type="match status" value="1"/>
</dbReference>
<dbReference type="HAMAP" id="MF_00227">
    <property type="entry name" value="RNase_P"/>
    <property type="match status" value="1"/>
</dbReference>
<dbReference type="InterPro" id="IPR020568">
    <property type="entry name" value="Ribosomal_Su5_D2-typ_SF"/>
</dbReference>
<dbReference type="InterPro" id="IPR014721">
    <property type="entry name" value="Ribsml_uS5_D2-typ_fold_subgr"/>
</dbReference>
<dbReference type="InterPro" id="IPR000100">
    <property type="entry name" value="RNase_P"/>
</dbReference>
<dbReference type="InterPro" id="IPR020539">
    <property type="entry name" value="RNase_P_CS"/>
</dbReference>
<dbReference type="NCBIfam" id="TIGR00188">
    <property type="entry name" value="rnpA"/>
    <property type="match status" value="1"/>
</dbReference>
<dbReference type="PANTHER" id="PTHR33992">
    <property type="entry name" value="RIBONUCLEASE P PROTEIN COMPONENT"/>
    <property type="match status" value="1"/>
</dbReference>
<dbReference type="PANTHER" id="PTHR33992:SF1">
    <property type="entry name" value="RIBONUCLEASE P PROTEIN COMPONENT"/>
    <property type="match status" value="1"/>
</dbReference>
<dbReference type="Pfam" id="PF00825">
    <property type="entry name" value="Ribonuclease_P"/>
    <property type="match status" value="1"/>
</dbReference>
<dbReference type="SUPFAM" id="SSF54211">
    <property type="entry name" value="Ribosomal protein S5 domain 2-like"/>
    <property type="match status" value="1"/>
</dbReference>
<dbReference type="PROSITE" id="PS00648">
    <property type="entry name" value="RIBONUCLEASE_P"/>
    <property type="match status" value="1"/>
</dbReference>